<name>AG10B_RAT</name>
<accession>O88788</accession>
<evidence type="ECO:0000250" key="1">
    <source>
        <dbReference type="UniProtKB" id="Q5I7T1"/>
    </source>
</evidence>
<evidence type="ECO:0000255" key="2"/>
<evidence type="ECO:0000269" key="3">
    <source>
    </source>
</evidence>
<evidence type="ECO:0000269" key="4">
    <source>
    </source>
</evidence>
<evidence type="ECO:0000303" key="5">
    <source>
    </source>
</evidence>
<evidence type="ECO:0000305" key="6"/>
<evidence type="ECO:0000305" key="7">
    <source>
    </source>
</evidence>
<evidence type="ECO:0000312" key="8">
    <source>
        <dbReference type="RGD" id="708500"/>
    </source>
</evidence>
<sequence length="474" mass="55574">MAQLEGYYFSAALSCTFLVSCLLFSAFSRALREPYMDEIFHLPQAQRYCEGRFSLSQWDPMITTLPGLYLVSVGVVKPASWILGWSEHVVCSIGMLRFVNLLFSVGNFYLLYLLFRKIQPRNKASSSIQRILSTLTLAVFPTLYFFNFLYYTEAGSVFFTLFAYLMCLYGNHRTSALLGFCGFMFRQTNIIWAAFCAGHIIAQKCSEAWKTELQKKKEERLPPAKGPLSELRRVLQFLLMYSMSLKNLSMLFLLTWPYMLLLLAFFVFVVVNGGIVVGDRSSHEACLHFPQLFYFFSFTAFFSFPHLLSPTKVKTFLSLVWKRRVQFSVITLVSVFLVWKFTYVHKYLLADNRHYTFYVWKRVFQRHEIVKYLLVPAYMFAGWAVADSLKSKSIFWNLMFFVCLVASTVPQKLLEFRYFILPYIIYRLNMPLPPISRLVCELGCYAVVNFLTFYIFLNKTFQWSDSHDIQRFMW</sequence>
<protein>
    <recommendedName>
        <fullName evidence="1">Dol-P-Glc:Glc(2)Man(9)GlcNAc(2)-PP-Dol alpha-1,2-glucosyltransferase</fullName>
        <ecNumber evidence="1">2.4.1.256</ecNumber>
    </recommendedName>
    <alternativeName>
        <fullName>Alpha-1,2-glucosyltransferase ALG10-A</fullName>
    </alternativeName>
    <alternativeName>
        <fullName>Alpha-2-glucosyltransferase ALG10-B</fullName>
    </alternativeName>
    <alternativeName>
        <fullName evidence="8">Asparagine-linked glycosylation protein 10 homolog B</fullName>
    </alternativeName>
    <alternativeName>
        <fullName evidence="5">Potassium channel regulator 1</fullName>
    </alternativeName>
</protein>
<feature type="chain" id="PRO_0000215449" description="Dol-P-Glc:Glc(2)Man(9)GlcNAc(2)-PP-Dol alpha-1,2-glucosyltransferase">
    <location>
        <begin position="1"/>
        <end position="474"/>
    </location>
</feature>
<feature type="topological domain" description="Cytoplasmic" evidence="2">
    <location>
        <begin position="1"/>
        <end position="6"/>
    </location>
</feature>
<feature type="transmembrane region" description="Helical" evidence="2">
    <location>
        <begin position="7"/>
        <end position="27"/>
    </location>
</feature>
<feature type="topological domain" description="Extracellular" evidence="2">
    <location>
        <begin position="28"/>
        <end position="64"/>
    </location>
</feature>
<feature type="transmembrane region" description="Helical" evidence="2">
    <location>
        <begin position="65"/>
        <end position="85"/>
    </location>
</feature>
<feature type="topological domain" description="Cytoplasmic" evidence="2">
    <location>
        <begin position="86"/>
        <end position="97"/>
    </location>
</feature>
<feature type="transmembrane region" description="Helical" evidence="2">
    <location>
        <begin position="98"/>
        <end position="118"/>
    </location>
</feature>
<feature type="topological domain" description="Extracellular" evidence="2">
    <location>
        <begin position="119"/>
        <end position="126"/>
    </location>
</feature>
<feature type="transmembrane region" description="Helical" evidence="2">
    <location>
        <begin position="127"/>
        <end position="147"/>
    </location>
</feature>
<feature type="topological domain" description="Cytoplasmic" evidence="2">
    <location>
        <begin position="148"/>
        <end position="150"/>
    </location>
</feature>
<feature type="transmembrane region" description="Helical" evidence="2">
    <location>
        <begin position="151"/>
        <end position="171"/>
    </location>
</feature>
<feature type="topological domain" description="Extracellular" evidence="2">
    <location>
        <begin position="172"/>
        <end position="175"/>
    </location>
</feature>
<feature type="transmembrane region" description="Helical" evidence="2">
    <location>
        <begin position="176"/>
        <end position="196"/>
    </location>
</feature>
<feature type="topological domain" description="Cytoplasmic" evidence="2">
    <location>
        <begin position="197"/>
        <end position="256"/>
    </location>
</feature>
<feature type="transmembrane region" description="Helical" evidence="2">
    <location>
        <begin position="257"/>
        <end position="277"/>
    </location>
</feature>
<feature type="topological domain" description="Extracellular" evidence="2">
    <location>
        <begin position="278"/>
        <end position="283"/>
    </location>
</feature>
<feature type="transmembrane region" description="Helical" evidence="2">
    <location>
        <begin position="284"/>
        <end position="304"/>
    </location>
</feature>
<feature type="topological domain" description="Cytoplasmic" evidence="2">
    <location>
        <begin position="305"/>
        <end position="317"/>
    </location>
</feature>
<feature type="transmembrane region" description="Helical" evidence="2">
    <location>
        <begin position="318"/>
        <end position="338"/>
    </location>
</feature>
<feature type="topological domain" description="Extracellular" evidence="2">
    <location>
        <begin position="339"/>
        <end position="365"/>
    </location>
</feature>
<feature type="transmembrane region" description="Helical" evidence="2">
    <location>
        <begin position="366"/>
        <end position="386"/>
    </location>
</feature>
<feature type="topological domain" description="Cytoplasmic" evidence="2">
    <location>
        <begin position="387"/>
        <end position="392"/>
    </location>
</feature>
<feature type="transmembrane region" description="Helical" evidence="2">
    <location>
        <begin position="393"/>
        <end position="413"/>
    </location>
</feature>
<feature type="topological domain" description="Extracellular" evidence="2">
    <location>
        <begin position="414"/>
        <end position="436"/>
    </location>
</feature>
<feature type="transmembrane region" description="Helical" evidence="2">
    <location>
        <begin position="437"/>
        <end position="457"/>
    </location>
</feature>
<feature type="topological domain" description="Cytoplasmic" evidence="2">
    <location>
        <begin position="458"/>
        <end position="473"/>
    </location>
</feature>
<proteinExistence type="evidence at protein level"/>
<comment type="function">
    <text evidence="1">Dol-P-Glc:Glc(2)Man(9)GlcNAc(2)-PP-Dol alpha-1,2-glucosyltransferase that operates in the biosynthetic pathway of dolichol-linked oligosaccharides, the glycan precursors employed in protein asparagine (N)-glycosylation. The assembly of dolichol-linked oligosaccharides begins on the cytosolic side of the endoplasmic reticulum membrane and finishes in its lumen. The sequential addition of sugars to dolichol pyrophosphate produces dolichol-linked oligosaccharides containing fourteen sugars, including two GlcNAcs, nine mannoses and three glucoses. Once assembled, the oligosaccharide is transferred from the lipid to nascent proteins by oligosaccharyltransferases. In the lumen of the endoplasmic reticulum, adds the third and last glucose residue from dolichyl phosphate glucose (Dol-P-Glc) onto the lipid-linked oligosaccharide intermediate Glc(2)Man(9)GlcNAc(2)-PP-Dol to produce Glc(3)Man(9)GlcNAc(2)-PP-Dol.</text>
</comment>
<comment type="catalytic activity">
    <reaction evidence="1">
        <text>an alpha-D-Glc-(1-&gt;3)-alpha-D-Glc-(1-&gt;3)-alpha-D-Man-(1-&gt;2)-alpha-D-Man-(1-&gt;2)-alpha-D-Man-(1-&gt;3)-[alpha-D-Man-(1-&gt;2)-alpha-D-Man-(1-&gt;3)-[alpha-D-Man-(1-&gt;2)-alpha-D-Man-(1-&gt;6)]-alpha-D-Man-(1-&gt;6)]-beta-D-Man-(1-&gt;4)-beta-D-GlcNAc-(1-&gt;4)-alpha-D-GlcNAc-diphospho-di-trans,poly-cis-dolichol + a di-trans,poly-cis-dolichyl beta-D-glucosyl phosphate = a alpha-D-Glc-(1-&gt;2)-alpha-D-Glc-(1-&gt;3)-alpha-D-Glc-(1-&gt;3)-alpha-D-Man-(1-&gt;2)-alpha-D-Man-(1-&gt;2)-alpha-D-Man-(1-&gt;3)-[alpha-D-Man-(1-&gt;2)-alpha-D-Man-(1-&gt;3)-[alpha-D-Man-(1-&gt;2)-alpha-D-Man-(1-&gt;6)]-alpha-D-Man-(1-&gt;6)]-beta-D-Man-(1-&gt;4)-beta-D-GlcNAc-(1-&gt;4)-alpha-D-GlcNAc-diphospho-di-trans,poly-cis-dolichol + a di-trans,poly-cis-dolichyl phosphate + H(+)</text>
        <dbReference type="Rhea" id="RHEA:29543"/>
        <dbReference type="Rhea" id="RHEA-COMP:19498"/>
        <dbReference type="Rhea" id="RHEA-COMP:19502"/>
        <dbReference type="Rhea" id="RHEA-COMP:19512"/>
        <dbReference type="Rhea" id="RHEA-COMP:19522"/>
        <dbReference type="ChEBI" id="CHEBI:15378"/>
        <dbReference type="ChEBI" id="CHEBI:57525"/>
        <dbReference type="ChEBI" id="CHEBI:57683"/>
        <dbReference type="ChEBI" id="CHEBI:132522"/>
        <dbReference type="ChEBI" id="CHEBI:132523"/>
        <dbReference type="EC" id="2.4.1.256"/>
    </reaction>
    <physiologicalReaction direction="left-to-right" evidence="1">
        <dbReference type="Rhea" id="RHEA:29544"/>
    </physiologicalReaction>
</comment>
<comment type="pathway">
    <text evidence="1">Protein modification; protein glycosylation.</text>
</comment>
<comment type="subunit">
    <text evidence="3 7">Interacts with KCNH1; may regulate KCNH1, possibly by regulating its N-glycosylation (Probable). Interacts with KCNH2; may reduce KCNH2 sensitivity to classic proarrhythmic drug blockade, possibly by regulating its N-glycosylation (PubMed:14525949).</text>
</comment>
<comment type="subcellular location">
    <subcellularLocation>
        <location evidence="4">Endoplasmic reticulum membrane</location>
        <topology evidence="2">Multi-pass membrane protein</topology>
    </subcellularLocation>
    <text evidence="3">Also detected at the plasma membrane.</text>
</comment>
<comment type="tissue specificity">
    <text evidence="4">Highly expressed in brain, skeletal muscle, uterus, small intestine and liver. Moderately expressed in lung and kidney. Weakly expressed in heart and stomach.</text>
</comment>
<comment type="similarity">
    <text evidence="6">Belongs to the ALG10 glucosyltransferase family.</text>
</comment>
<gene>
    <name evidence="8" type="primary">Alg10b</name>
    <name evidence="5" type="synonym">Kcr1</name>
</gene>
<organism>
    <name type="scientific">Rattus norvegicus</name>
    <name type="common">Rat</name>
    <dbReference type="NCBI Taxonomy" id="10116"/>
    <lineage>
        <taxon>Eukaryota</taxon>
        <taxon>Metazoa</taxon>
        <taxon>Chordata</taxon>
        <taxon>Craniata</taxon>
        <taxon>Vertebrata</taxon>
        <taxon>Euteleostomi</taxon>
        <taxon>Mammalia</taxon>
        <taxon>Eutheria</taxon>
        <taxon>Euarchontoglires</taxon>
        <taxon>Glires</taxon>
        <taxon>Rodentia</taxon>
        <taxon>Myomorpha</taxon>
        <taxon>Muroidea</taxon>
        <taxon>Muridae</taxon>
        <taxon>Murinae</taxon>
        <taxon>Rattus</taxon>
    </lineage>
</organism>
<reference key="1">
    <citation type="journal article" date="1998" name="J. Biol. Chem.">
        <title>KCR1, a membrane protein that facilitates functional expression of non-inactivating K+ currents associates with rat EAG voltage-dependent K+ channels.</title>
        <authorList>
            <person name="Hoshi N."/>
            <person name="Takahashi H."/>
            <person name="Shahidullah M."/>
            <person name="Yokoyama S."/>
            <person name="Higashida H."/>
        </authorList>
    </citation>
    <scope>NUCLEOTIDE SEQUENCE [MRNA]</scope>
    <scope>INTERACTION WITH KCNH1</scope>
    <scope>SUBCELLULAR LOCATION</scope>
    <scope>TISSUE SPECIFICITY</scope>
    <source>
        <strain>Wistar</strain>
        <tissue>Cerebellum</tissue>
    </source>
</reference>
<reference key="2">
    <citation type="journal article" date="2003" name="FASEB J.">
        <title>The IKr drug response is modulated by KCR1 in transfected cardiac and noncardiac cell lines.</title>
        <authorList>
            <person name="Kupershmidt S."/>
            <person name="Yang I.C.-H."/>
            <person name="Hayashi K."/>
            <person name="Wei J."/>
            <person name="Chanthaphaychith S."/>
            <person name="Petersen C.I."/>
            <person name="Johns D.C."/>
            <person name="George A.L. Jr."/>
            <person name="Roden D.M."/>
            <person name="Balser J.R."/>
        </authorList>
    </citation>
    <scope>INTERACTION WITH KCNH2</scope>
    <scope>SUBCELLULAR LOCATION</scope>
</reference>
<keyword id="KW-0256">Endoplasmic reticulum</keyword>
<keyword id="KW-0328">Glycosyltransferase</keyword>
<keyword id="KW-0472">Membrane</keyword>
<keyword id="KW-1185">Reference proteome</keyword>
<keyword id="KW-0808">Transferase</keyword>
<keyword id="KW-0812">Transmembrane</keyword>
<keyword id="KW-1133">Transmembrane helix</keyword>
<dbReference type="EC" id="2.4.1.256" evidence="1"/>
<dbReference type="EMBL" id="U78090">
    <property type="protein sequence ID" value="AAC34249.1"/>
    <property type="molecule type" value="mRNA"/>
</dbReference>
<dbReference type="RefSeq" id="NP_620801.1">
    <property type="nucleotide sequence ID" value="NM_139101.2"/>
</dbReference>
<dbReference type="FunCoup" id="O88788">
    <property type="interactions" value="3350"/>
</dbReference>
<dbReference type="STRING" id="10116.ENSRNOP00000019672"/>
<dbReference type="CAZy" id="GT59">
    <property type="family name" value="Glycosyltransferase Family 59"/>
</dbReference>
<dbReference type="PhosphoSitePlus" id="O88788"/>
<dbReference type="PaxDb" id="10116-ENSRNOP00000019672"/>
<dbReference type="Ensembl" id="ENSRNOT00000019672.6">
    <property type="protein sequence ID" value="ENSRNOP00000019672.2"/>
    <property type="gene ID" value="ENSRNOG00000014511.6"/>
</dbReference>
<dbReference type="GeneID" id="245960"/>
<dbReference type="KEGG" id="rno:245960"/>
<dbReference type="AGR" id="RGD:708500"/>
<dbReference type="CTD" id="84920"/>
<dbReference type="RGD" id="708500">
    <property type="gene designation" value="Alg10b"/>
</dbReference>
<dbReference type="eggNOG" id="KOG2642">
    <property type="taxonomic scope" value="Eukaryota"/>
</dbReference>
<dbReference type="GeneTree" id="ENSGT00390000012906"/>
<dbReference type="HOGENOM" id="CLU_017053_1_0_1"/>
<dbReference type="InParanoid" id="O88788"/>
<dbReference type="OMA" id="VWDSKIT"/>
<dbReference type="OrthoDB" id="4769at2759"/>
<dbReference type="PhylomeDB" id="O88788"/>
<dbReference type="TreeFam" id="TF300150"/>
<dbReference type="UniPathway" id="UPA00378"/>
<dbReference type="PRO" id="PR:O88788"/>
<dbReference type="Proteomes" id="UP000002494">
    <property type="component" value="Chromosome 7"/>
</dbReference>
<dbReference type="Bgee" id="ENSRNOG00000014511">
    <property type="expression patterns" value="Expressed in duodenum and 18 other cell types or tissues"/>
</dbReference>
<dbReference type="GO" id="GO:0005783">
    <property type="term" value="C:endoplasmic reticulum"/>
    <property type="evidence" value="ECO:0000318"/>
    <property type="project" value="GO_Central"/>
</dbReference>
<dbReference type="GO" id="GO:0005789">
    <property type="term" value="C:endoplasmic reticulum membrane"/>
    <property type="evidence" value="ECO:0000250"/>
    <property type="project" value="UniProtKB"/>
</dbReference>
<dbReference type="GO" id="GO:0106073">
    <property type="term" value="F:dolichyl pyrophosphate Glc2Man9GlcNAc2 alpha-1,2-glucosyltransferase activity"/>
    <property type="evidence" value="ECO:0000250"/>
    <property type="project" value="UniProtKB"/>
</dbReference>
<dbReference type="GO" id="GO:0060117">
    <property type="term" value="P:auditory receptor cell development"/>
    <property type="evidence" value="ECO:0007669"/>
    <property type="project" value="Ensembl"/>
</dbReference>
<dbReference type="GO" id="GO:0006488">
    <property type="term" value="P:dolichol-linked oligosaccharide biosynthetic process"/>
    <property type="evidence" value="ECO:0000250"/>
    <property type="project" value="UniProtKB"/>
</dbReference>
<dbReference type="GO" id="GO:0071805">
    <property type="term" value="P:potassium ion transmembrane transport"/>
    <property type="evidence" value="ECO:0000314"/>
    <property type="project" value="RGD"/>
</dbReference>
<dbReference type="GO" id="GO:0006487">
    <property type="term" value="P:protein N-linked glycosylation"/>
    <property type="evidence" value="ECO:0000250"/>
    <property type="project" value="UniProtKB"/>
</dbReference>
<dbReference type="GO" id="GO:0007605">
    <property type="term" value="P:sensory perception of sound"/>
    <property type="evidence" value="ECO:0007669"/>
    <property type="project" value="Ensembl"/>
</dbReference>
<dbReference type="InterPro" id="IPR016900">
    <property type="entry name" value="Alg10"/>
</dbReference>
<dbReference type="PANTHER" id="PTHR12989">
    <property type="entry name" value="ALPHA-1,2-GLUCOSYLTRANSFERASE ALG10"/>
    <property type="match status" value="1"/>
</dbReference>
<dbReference type="PANTHER" id="PTHR12989:SF10">
    <property type="entry name" value="DOL-P-GLC:GLC(2)MAN(9)GLCNAC(2)-PP-DOL ALPHA-1,2-GLUCOSYLTRANSFERASE-RELATED"/>
    <property type="match status" value="1"/>
</dbReference>
<dbReference type="Pfam" id="PF04922">
    <property type="entry name" value="DIE2_ALG10"/>
    <property type="match status" value="1"/>
</dbReference>
<dbReference type="PIRSF" id="PIRSF028810">
    <property type="entry name" value="Alpha1_2_glucosyltferase_Alg10"/>
    <property type="match status" value="1"/>
</dbReference>